<dbReference type="EC" id="6.3.5.5" evidence="1"/>
<dbReference type="EMBL" id="CP001010">
    <property type="protein sequence ID" value="ACB44050.1"/>
    <property type="molecule type" value="Genomic_DNA"/>
</dbReference>
<dbReference type="SMR" id="B1XUM3"/>
<dbReference type="STRING" id="452638.Pnec_0848"/>
<dbReference type="KEGG" id="pne:Pnec_0848"/>
<dbReference type="eggNOG" id="COG0505">
    <property type="taxonomic scope" value="Bacteria"/>
</dbReference>
<dbReference type="HOGENOM" id="CLU_035901_2_1_4"/>
<dbReference type="UniPathway" id="UPA00068">
    <property type="reaction ID" value="UER00171"/>
</dbReference>
<dbReference type="UniPathway" id="UPA00070">
    <property type="reaction ID" value="UER00115"/>
</dbReference>
<dbReference type="GO" id="GO:0005524">
    <property type="term" value="F:ATP binding"/>
    <property type="evidence" value="ECO:0007669"/>
    <property type="project" value="UniProtKB-UniRule"/>
</dbReference>
<dbReference type="GO" id="GO:0004088">
    <property type="term" value="F:carbamoyl-phosphate synthase (glutamine-hydrolyzing) activity"/>
    <property type="evidence" value="ECO:0007669"/>
    <property type="project" value="UniProtKB-UniRule"/>
</dbReference>
<dbReference type="GO" id="GO:0004359">
    <property type="term" value="F:glutaminase activity"/>
    <property type="evidence" value="ECO:0007669"/>
    <property type="project" value="RHEA"/>
</dbReference>
<dbReference type="GO" id="GO:0006207">
    <property type="term" value="P:'de novo' pyrimidine nucleobase biosynthetic process"/>
    <property type="evidence" value="ECO:0007669"/>
    <property type="project" value="InterPro"/>
</dbReference>
<dbReference type="GO" id="GO:0044205">
    <property type="term" value="P:'de novo' UMP biosynthetic process"/>
    <property type="evidence" value="ECO:0007669"/>
    <property type="project" value="UniProtKB-UniRule"/>
</dbReference>
<dbReference type="GO" id="GO:0006541">
    <property type="term" value="P:glutamine metabolic process"/>
    <property type="evidence" value="ECO:0007669"/>
    <property type="project" value="InterPro"/>
</dbReference>
<dbReference type="GO" id="GO:0006526">
    <property type="term" value="P:L-arginine biosynthetic process"/>
    <property type="evidence" value="ECO:0007669"/>
    <property type="project" value="UniProtKB-UniRule"/>
</dbReference>
<dbReference type="CDD" id="cd01744">
    <property type="entry name" value="GATase1_CPSase"/>
    <property type="match status" value="1"/>
</dbReference>
<dbReference type="FunFam" id="3.40.50.880:FF:000011">
    <property type="entry name" value="Carbamoyl-phosphate synthase small chain"/>
    <property type="match status" value="1"/>
</dbReference>
<dbReference type="FunFam" id="3.50.30.20:FF:000001">
    <property type="entry name" value="Carbamoyl-phosphate synthase small chain"/>
    <property type="match status" value="1"/>
</dbReference>
<dbReference type="Gene3D" id="3.40.50.880">
    <property type="match status" value="1"/>
</dbReference>
<dbReference type="Gene3D" id="3.50.30.20">
    <property type="entry name" value="Carbamoyl-phosphate synthase small subunit, N-terminal domain"/>
    <property type="match status" value="1"/>
</dbReference>
<dbReference type="HAMAP" id="MF_01209">
    <property type="entry name" value="CPSase_S_chain"/>
    <property type="match status" value="1"/>
</dbReference>
<dbReference type="InterPro" id="IPR050472">
    <property type="entry name" value="Anth_synth/Amidotransfase"/>
</dbReference>
<dbReference type="InterPro" id="IPR006274">
    <property type="entry name" value="CarbamoylP_synth_ssu"/>
</dbReference>
<dbReference type="InterPro" id="IPR002474">
    <property type="entry name" value="CarbamoylP_synth_ssu_N"/>
</dbReference>
<dbReference type="InterPro" id="IPR036480">
    <property type="entry name" value="CarbP_synth_ssu_N_sf"/>
</dbReference>
<dbReference type="InterPro" id="IPR029062">
    <property type="entry name" value="Class_I_gatase-like"/>
</dbReference>
<dbReference type="InterPro" id="IPR035686">
    <property type="entry name" value="CPSase_GATase1"/>
</dbReference>
<dbReference type="InterPro" id="IPR017926">
    <property type="entry name" value="GATASE"/>
</dbReference>
<dbReference type="NCBIfam" id="TIGR01368">
    <property type="entry name" value="CPSaseIIsmall"/>
    <property type="match status" value="1"/>
</dbReference>
<dbReference type="NCBIfam" id="NF009475">
    <property type="entry name" value="PRK12838.1"/>
    <property type="match status" value="1"/>
</dbReference>
<dbReference type="PANTHER" id="PTHR43418:SF7">
    <property type="entry name" value="CARBAMOYL-PHOSPHATE SYNTHASE SMALL CHAIN"/>
    <property type="match status" value="1"/>
</dbReference>
<dbReference type="PANTHER" id="PTHR43418">
    <property type="entry name" value="MULTIFUNCTIONAL TRYPTOPHAN BIOSYNTHESIS PROTEIN-RELATED"/>
    <property type="match status" value="1"/>
</dbReference>
<dbReference type="Pfam" id="PF00988">
    <property type="entry name" value="CPSase_sm_chain"/>
    <property type="match status" value="1"/>
</dbReference>
<dbReference type="Pfam" id="PF00117">
    <property type="entry name" value="GATase"/>
    <property type="match status" value="1"/>
</dbReference>
<dbReference type="PRINTS" id="PR00099">
    <property type="entry name" value="CPSGATASE"/>
</dbReference>
<dbReference type="PRINTS" id="PR00096">
    <property type="entry name" value="GATASE"/>
</dbReference>
<dbReference type="SMART" id="SM01097">
    <property type="entry name" value="CPSase_sm_chain"/>
    <property type="match status" value="1"/>
</dbReference>
<dbReference type="SUPFAM" id="SSF52021">
    <property type="entry name" value="Carbamoyl phosphate synthetase, small subunit N-terminal domain"/>
    <property type="match status" value="1"/>
</dbReference>
<dbReference type="SUPFAM" id="SSF52317">
    <property type="entry name" value="Class I glutamine amidotransferase-like"/>
    <property type="match status" value="1"/>
</dbReference>
<dbReference type="PROSITE" id="PS51273">
    <property type="entry name" value="GATASE_TYPE_1"/>
    <property type="match status" value="1"/>
</dbReference>
<sequence length="398" mass="42325">MSPLLPSFPPAVLALADGSIFPGYSIGAPGETTGEVVFNTALTGYQEIITDPSYSRQIVTLTYPHIGNVGVNAQDAESDRIHAAGLVVKDLPKRVSSFRSEGALDDYLTKAGVLGIAGIDTRKLTRILRDKGAQSGAIVAGKVGDSYETLVSKALELAKAFPGMSGLDLAKVVTTQKVYEWREAEWNLHGADGKPAYGTLDTGKPINKVVAYDFGVKRNILRMLTERGCQLTVVPAQTTAAEVLAMNPDGVFFSNGPGDPGPCDYAIAAAKEIIEKGVPTFGICLGHQIMGLAAGAKTLKMKFGHHGANHPVKDLDTGRVAITSQNHGFAVDANTLPDNIRVTHVSLFDGSLQGLAWKDKPELCFQGHPEASPGPHDIAYLFDRFVELMNAASKKEGE</sequence>
<reference key="1">
    <citation type="journal article" date="2013" name="Proc. Natl. Acad. Sci. U.S.A.">
        <title>Polynucleobacter necessarius, a model for genome reduction in both free-living and symbiotic bacteria.</title>
        <authorList>
            <person name="Boscaro V."/>
            <person name="Felletti M."/>
            <person name="Vannini C."/>
            <person name="Ackerman M.S."/>
            <person name="Chain P.S."/>
            <person name="Malfatti S."/>
            <person name="Vergez L.M."/>
            <person name="Shin M."/>
            <person name="Doak T.G."/>
            <person name="Lynch M."/>
            <person name="Petroni G."/>
        </authorList>
    </citation>
    <scope>NUCLEOTIDE SEQUENCE [LARGE SCALE GENOMIC DNA]</scope>
    <source>
        <strain>STIR1</strain>
    </source>
</reference>
<feature type="chain" id="PRO_1000138875" description="Carbamoyl phosphate synthase small chain">
    <location>
        <begin position="1"/>
        <end position="398"/>
    </location>
</feature>
<feature type="domain" description="Glutamine amidotransferase type-1" evidence="1">
    <location>
        <begin position="208"/>
        <end position="395"/>
    </location>
</feature>
<feature type="region of interest" description="CPSase" evidence="1">
    <location>
        <begin position="1"/>
        <end position="204"/>
    </location>
</feature>
<feature type="active site" description="Nucleophile" evidence="1">
    <location>
        <position position="284"/>
    </location>
</feature>
<feature type="active site" evidence="1">
    <location>
        <position position="368"/>
    </location>
</feature>
<feature type="active site" evidence="1">
    <location>
        <position position="370"/>
    </location>
</feature>
<feature type="binding site" evidence="1">
    <location>
        <position position="53"/>
    </location>
    <ligand>
        <name>L-glutamine</name>
        <dbReference type="ChEBI" id="CHEBI:58359"/>
    </ligand>
</feature>
<feature type="binding site" evidence="1">
    <location>
        <position position="256"/>
    </location>
    <ligand>
        <name>L-glutamine</name>
        <dbReference type="ChEBI" id="CHEBI:58359"/>
    </ligand>
</feature>
<feature type="binding site" evidence="1">
    <location>
        <position position="258"/>
    </location>
    <ligand>
        <name>L-glutamine</name>
        <dbReference type="ChEBI" id="CHEBI:58359"/>
    </ligand>
</feature>
<feature type="binding site" evidence="1">
    <location>
        <position position="285"/>
    </location>
    <ligand>
        <name>L-glutamine</name>
        <dbReference type="ChEBI" id="CHEBI:58359"/>
    </ligand>
</feature>
<feature type="binding site" evidence="1">
    <location>
        <position position="288"/>
    </location>
    <ligand>
        <name>L-glutamine</name>
        <dbReference type="ChEBI" id="CHEBI:58359"/>
    </ligand>
</feature>
<feature type="binding site" evidence="1">
    <location>
        <position position="326"/>
    </location>
    <ligand>
        <name>L-glutamine</name>
        <dbReference type="ChEBI" id="CHEBI:58359"/>
    </ligand>
</feature>
<feature type="binding site" evidence="1">
    <location>
        <position position="328"/>
    </location>
    <ligand>
        <name>L-glutamine</name>
        <dbReference type="ChEBI" id="CHEBI:58359"/>
    </ligand>
</feature>
<feature type="binding site" evidence="1">
    <location>
        <position position="329"/>
    </location>
    <ligand>
        <name>L-glutamine</name>
        <dbReference type="ChEBI" id="CHEBI:58359"/>
    </ligand>
</feature>
<accession>B1XUM3</accession>
<evidence type="ECO:0000255" key="1">
    <source>
        <dbReference type="HAMAP-Rule" id="MF_01209"/>
    </source>
</evidence>
<protein>
    <recommendedName>
        <fullName evidence="1">Carbamoyl phosphate synthase small chain</fullName>
        <ecNumber evidence="1">6.3.5.5</ecNumber>
    </recommendedName>
    <alternativeName>
        <fullName evidence="1">Carbamoyl phosphate synthetase glutamine chain</fullName>
    </alternativeName>
</protein>
<keyword id="KW-0028">Amino-acid biosynthesis</keyword>
<keyword id="KW-0055">Arginine biosynthesis</keyword>
<keyword id="KW-0067">ATP-binding</keyword>
<keyword id="KW-0315">Glutamine amidotransferase</keyword>
<keyword id="KW-0436">Ligase</keyword>
<keyword id="KW-0547">Nucleotide-binding</keyword>
<keyword id="KW-0665">Pyrimidine biosynthesis</keyword>
<comment type="function">
    <text evidence="1">Small subunit of the glutamine-dependent carbamoyl phosphate synthetase (CPSase). CPSase catalyzes the formation of carbamoyl phosphate from the ammonia moiety of glutamine, carbonate, and phosphate donated by ATP, constituting the first step of 2 biosynthetic pathways, one leading to arginine and/or urea and the other to pyrimidine nucleotides. The small subunit (glutamine amidotransferase) binds and cleaves glutamine to supply the large subunit with the substrate ammonia.</text>
</comment>
<comment type="catalytic activity">
    <reaction evidence="1">
        <text>hydrogencarbonate + L-glutamine + 2 ATP + H2O = carbamoyl phosphate + L-glutamate + 2 ADP + phosphate + 2 H(+)</text>
        <dbReference type="Rhea" id="RHEA:18633"/>
        <dbReference type="ChEBI" id="CHEBI:15377"/>
        <dbReference type="ChEBI" id="CHEBI:15378"/>
        <dbReference type="ChEBI" id="CHEBI:17544"/>
        <dbReference type="ChEBI" id="CHEBI:29985"/>
        <dbReference type="ChEBI" id="CHEBI:30616"/>
        <dbReference type="ChEBI" id="CHEBI:43474"/>
        <dbReference type="ChEBI" id="CHEBI:58228"/>
        <dbReference type="ChEBI" id="CHEBI:58359"/>
        <dbReference type="ChEBI" id="CHEBI:456216"/>
        <dbReference type="EC" id="6.3.5.5"/>
    </reaction>
</comment>
<comment type="catalytic activity">
    <molecule>Carbamoyl phosphate synthase small chain</molecule>
    <reaction evidence="1">
        <text>L-glutamine + H2O = L-glutamate + NH4(+)</text>
        <dbReference type="Rhea" id="RHEA:15889"/>
        <dbReference type="ChEBI" id="CHEBI:15377"/>
        <dbReference type="ChEBI" id="CHEBI:28938"/>
        <dbReference type="ChEBI" id="CHEBI:29985"/>
        <dbReference type="ChEBI" id="CHEBI:58359"/>
    </reaction>
</comment>
<comment type="pathway">
    <text evidence="1">Amino-acid biosynthesis; L-arginine biosynthesis; carbamoyl phosphate from bicarbonate: step 1/1.</text>
</comment>
<comment type="pathway">
    <text evidence="1">Pyrimidine metabolism; UMP biosynthesis via de novo pathway; (S)-dihydroorotate from bicarbonate: step 1/3.</text>
</comment>
<comment type="subunit">
    <text evidence="1">Composed of two chains; the small (or glutamine) chain promotes the hydrolysis of glutamine to ammonia, which is used by the large (or ammonia) chain to synthesize carbamoyl phosphate. Tetramer of heterodimers (alpha,beta)4.</text>
</comment>
<comment type="similarity">
    <text evidence="1">Belongs to the CarA family.</text>
</comment>
<name>CARA_POLNS</name>
<gene>
    <name evidence="1" type="primary">carA</name>
    <name type="ordered locus">Pnec_0848</name>
</gene>
<proteinExistence type="inferred from homology"/>
<organism>
    <name type="scientific">Polynucleobacter necessarius subsp. necessarius (strain STIR1)</name>
    <dbReference type="NCBI Taxonomy" id="452638"/>
    <lineage>
        <taxon>Bacteria</taxon>
        <taxon>Pseudomonadati</taxon>
        <taxon>Pseudomonadota</taxon>
        <taxon>Betaproteobacteria</taxon>
        <taxon>Burkholderiales</taxon>
        <taxon>Burkholderiaceae</taxon>
        <taxon>Polynucleobacter</taxon>
    </lineage>
</organism>